<protein>
    <recommendedName>
        <fullName>Endoglucanase 1</fullName>
        <ecNumber>3.2.1.4</ecNumber>
    </recommendedName>
    <alternativeName>
        <fullName>Abscission cellulase 1</fullName>
    </alternativeName>
    <alternativeName>
        <fullName>Endo-1,4-beta-glucanase 1</fullName>
    </alternativeName>
</protein>
<gene>
    <name type="primary">CEL1</name>
</gene>
<dbReference type="EC" id="3.2.1.4"/>
<dbReference type="EMBL" id="M17634">
    <property type="protein sequence ID" value="AAA32912.1"/>
    <property type="molecule type" value="mRNA"/>
</dbReference>
<dbReference type="EMBL" id="X59944">
    <property type="protein sequence ID" value="CAA42569.1"/>
    <property type="molecule type" value="Genomic_DNA"/>
</dbReference>
<dbReference type="PIR" id="S11946">
    <property type="entry name" value="S11946"/>
</dbReference>
<dbReference type="SMR" id="P05522"/>
<dbReference type="CAZy" id="GH9">
    <property type="family name" value="Glycoside Hydrolase Family 9"/>
</dbReference>
<dbReference type="GlyCosmos" id="P05522">
    <property type="glycosylation" value="2 sites, No reported glycans"/>
</dbReference>
<dbReference type="GO" id="GO:0008810">
    <property type="term" value="F:cellulase activity"/>
    <property type="evidence" value="ECO:0007669"/>
    <property type="project" value="UniProtKB-EC"/>
</dbReference>
<dbReference type="GO" id="GO:0030245">
    <property type="term" value="P:cellulose catabolic process"/>
    <property type="evidence" value="ECO:0007669"/>
    <property type="project" value="UniProtKB-KW"/>
</dbReference>
<dbReference type="GO" id="GO:0009835">
    <property type="term" value="P:fruit ripening"/>
    <property type="evidence" value="ECO:0007669"/>
    <property type="project" value="UniProtKB-KW"/>
</dbReference>
<dbReference type="FunFam" id="1.50.10.10:FF:000020">
    <property type="entry name" value="Endoglucanase"/>
    <property type="match status" value="1"/>
</dbReference>
<dbReference type="Gene3D" id="1.50.10.10">
    <property type="match status" value="1"/>
</dbReference>
<dbReference type="InterPro" id="IPR008928">
    <property type="entry name" value="6-hairpin_glycosidase_sf"/>
</dbReference>
<dbReference type="InterPro" id="IPR012341">
    <property type="entry name" value="6hp_glycosidase-like_sf"/>
</dbReference>
<dbReference type="InterPro" id="IPR001701">
    <property type="entry name" value="Glyco_hydro_9"/>
</dbReference>
<dbReference type="InterPro" id="IPR033126">
    <property type="entry name" value="Glyco_hydro_9_Asp/Glu_AS"/>
</dbReference>
<dbReference type="InterPro" id="IPR018221">
    <property type="entry name" value="Glyco_hydro_9_His_AS"/>
</dbReference>
<dbReference type="PANTHER" id="PTHR22298">
    <property type="entry name" value="ENDO-1,4-BETA-GLUCANASE"/>
    <property type="match status" value="1"/>
</dbReference>
<dbReference type="Pfam" id="PF00759">
    <property type="entry name" value="Glyco_hydro_9"/>
    <property type="match status" value="1"/>
</dbReference>
<dbReference type="SUPFAM" id="SSF48208">
    <property type="entry name" value="Six-hairpin glycosidases"/>
    <property type="match status" value="1"/>
</dbReference>
<dbReference type="PROSITE" id="PS60032">
    <property type="entry name" value="GH9_1"/>
    <property type="match status" value="1"/>
</dbReference>
<dbReference type="PROSITE" id="PS00592">
    <property type="entry name" value="GH9_2"/>
    <property type="match status" value="1"/>
</dbReference>
<dbReference type="PROSITE" id="PS00698">
    <property type="entry name" value="GH9_3"/>
    <property type="match status" value="1"/>
</dbReference>
<accession>P05522</accession>
<keyword id="KW-0119">Carbohydrate metabolism</keyword>
<keyword id="KW-0136">Cellulose degradation</keyword>
<keyword id="KW-0292">Fruit ripening</keyword>
<keyword id="KW-0325">Glycoprotein</keyword>
<keyword id="KW-0326">Glycosidase</keyword>
<keyword id="KW-0378">Hydrolase</keyword>
<keyword id="KW-0624">Polysaccharide degradation</keyword>
<keyword id="KW-0732">Signal</keyword>
<comment type="function">
    <text>Involved in ripening fruit process.</text>
</comment>
<comment type="catalytic activity">
    <reaction>
        <text>Endohydrolysis of (1-&gt;4)-beta-D-glucosidic linkages in cellulose, lichenin and cereal beta-D-glucans.</text>
        <dbReference type="EC" id="3.2.1.4"/>
    </reaction>
</comment>
<comment type="developmental stage">
    <text>In ripening fruit.</text>
</comment>
<comment type="similarity">
    <text evidence="4 5">Belongs to the glycosyl hydrolase 9 (cellulase E) family.</text>
</comment>
<sequence>MDCSSPLSLFHLLLVCTVMVKCCSASDLHYSDALEKSILFFEGQRSGKLPTNQRLTWRGDSGLSDGSSYHVDLVGGYYDAGDNLKFGLPMAFTTTMLAWGIIEFGCLMPEQVENARAALRWSTDYLLKASTATSNSLYVQVGEPNADHRCWERPEDMDTPRNVYKVSTQNPGSDVAAETAAALAAASIVFGDSDSSYSTKLLHTAVKVFEFADQYRGSYSDSLGSVVCPFYCSYSGYNDELLWGASWLHRASQNASYMTYIQSNGHTLGADDDDYSFSWDDKRVGTKVLLSKGFLQDRIEELQLYKVHTDNYICSLIPGTSSFQAQYTPGGLLYKGSASNLQYVTSTAFLLLTYANYLNSSGGHASCGTTTVTAKNLISLAKKQVDYILGQNPAKMSYMVGFGERYPQHVHHRGSSLPSVQVHPNSIPCNAGFQYLYSSPPNPNILVGAILGGPDNRDSFSDDRNNYQQSEPATYINAPLVGALAFFAANPVTE</sequence>
<feature type="signal peptide">
    <location>
        <begin position="1"/>
        <end position="25"/>
    </location>
</feature>
<feature type="chain" id="PRO_0000007955" description="Endoglucanase 1">
    <location>
        <begin position="26"/>
        <end position="494"/>
    </location>
</feature>
<feature type="active site" description="Nucleophile" evidence="4">
    <location>
        <position position="82"/>
    </location>
</feature>
<feature type="active site" evidence="2">
    <location>
        <position position="411"/>
    </location>
</feature>
<feature type="active site" evidence="3">
    <location>
        <position position="462"/>
    </location>
</feature>
<feature type="active site" evidence="3">
    <location>
        <position position="471"/>
    </location>
</feature>
<feature type="glycosylation site" description="N-linked (GlcNAc...) asparagine" evidence="1">
    <location>
        <position position="254"/>
    </location>
</feature>
<feature type="glycosylation site" description="N-linked (GlcNAc...) asparagine" evidence="1">
    <location>
        <position position="359"/>
    </location>
</feature>
<organism>
    <name type="scientific">Persea americana</name>
    <name type="common">Avocado</name>
    <dbReference type="NCBI Taxonomy" id="3435"/>
    <lineage>
        <taxon>Eukaryota</taxon>
        <taxon>Viridiplantae</taxon>
        <taxon>Streptophyta</taxon>
        <taxon>Embryophyta</taxon>
        <taxon>Tracheophyta</taxon>
        <taxon>Spermatophyta</taxon>
        <taxon>Magnoliopsida</taxon>
        <taxon>Magnoliidae</taxon>
        <taxon>Laurales</taxon>
        <taxon>Lauraceae</taxon>
        <taxon>Persea</taxon>
    </lineage>
</organism>
<evidence type="ECO:0000255" key="1"/>
<evidence type="ECO:0000255" key="2">
    <source>
        <dbReference type="PROSITE-ProRule" id="PRU10059"/>
    </source>
</evidence>
<evidence type="ECO:0000255" key="3">
    <source>
        <dbReference type="PROSITE-ProRule" id="PRU10060"/>
    </source>
</evidence>
<evidence type="ECO:0000255" key="4">
    <source>
        <dbReference type="PROSITE-ProRule" id="PRU10140"/>
    </source>
</evidence>
<evidence type="ECO:0000305" key="5"/>
<name>GUN1_PERAE</name>
<proteinExistence type="evidence at transcript level"/>
<reference key="1">
    <citation type="journal article" date="1987" name="Plant Mol. Biol.">
        <title>Avocado cellulase: nucleotide sequence of a putative full-length cDNA clone and evidence for a small gene family.</title>
        <authorList>
            <person name="Tucker M.L."/>
            <person name="Durbin M.L."/>
            <person name="Clegg M.T."/>
            <person name="Lewis L.N."/>
        </authorList>
        <dbReference type="AGRICOLA" id="IND91054589"/>
    </citation>
    <scope>NUCLEOTIDE SEQUENCE</scope>
</reference>
<reference key="2">
    <citation type="journal article" date="1990" name="Mol. Gen. Genet.">
        <title>Isolation and characterization of a cellulase gene family member expressed during avocado fruit ripening.</title>
        <authorList>
            <person name="Cass L.G."/>
            <person name="Kirven K.A."/>
            <person name="Christoffersen R.E."/>
        </authorList>
    </citation>
    <scope>NUCLEOTIDE SEQUENCE</scope>
    <source>
        <strain>cv. Hass</strain>
    </source>
</reference>